<comment type="domain">
    <text>Lacks the C2H3-type zinc-finger found in all members of this family.</text>
</comment>
<comment type="similarity">
    <text evidence="1">Belongs to the ros/MucR family.</text>
</comment>
<gene>
    <name type="ordered locus">NGR_a02080</name>
    <name type="ORF">y4pD</name>
</gene>
<proteinExistence type="inferred from homology"/>
<accession>P55613</accession>
<geneLocation type="plasmid">
    <name>sym pNGR234a</name>
</geneLocation>
<protein>
    <recommendedName>
        <fullName>Putative MucR family transcriptional regulatory protein y4pD</fullName>
    </recommendedName>
</protein>
<sequence>MNQPRLASGQRNLELTSRVVSAYLSRNIVPAADLASLIQQTYLSLCSTSQADKAEEAAVEEQRPAVPIKKSVTADFIICLEDGKKFKSLKRHLMAKYGLTPQQYREKWGLPADYPMVASSYAQKRSELARALGLGKKRTAPELGSGLVNHSQKMTEAAMQIAEKKVWAHRS</sequence>
<reference key="1">
    <citation type="journal article" date="1997" name="Nature">
        <title>Molecular basis of symbiosis between Rhizobium and legumes.</title>
        <authorList>
            <person name="Freiberg C.A."/>
            <person name="Fellay R."/>
            <person name="Bairoch A."/>
            <person name="Broughton W.J."/>
            <person name="Rosenthal A."/>
            <person name="Perret X."/>
        </authorList>
    </citation>
    <scope>NUCLEOTIDE SEQUENCE [LARGE SCALE GENOMIC DNA]</scope>
    <source>
        <strain>NBRC 101917 / NGR234</strain>
    </source>
</reference>
<reference key="2">
    <citation type="journal article" date="2009" name="Appl. Environ. Microbiol.">
        <title>Rhizobium sp. strain NGR234 possesses a remarkable number of secretion systems.</title>
        <authorList>
            <person name="Schmeisser C."/>
            <person name="Liesegang H."/>
            <person name="Krysciak D."/>
            <person name="Bakkou N."/>
            <person name="Le Quere A."/>
            <person name="Wollherr A."/>
            <person name="Heinemeyer I."/>
            <person name="Morgenstern B."/>
            <person name="Pommerening-Roeser A."/>
            <person name="Flores M."/>
            <person name="Palacios R."/>
            <person name="Brenner S."/>
            <person name="Gottschalk G."/>
            <person name="Schmitz R.A."/>
            <person name="Broughton W.J."/>
            <person name="Perret X."/>
            <person name="Strittmatter A.W."/>
            <person name="Streit W.R."/>
        </authorList>
    </citation>
    <scope>NUCLEOTIDE SEQUENCE [LARGE SCALE GENOMIC DNA]</scope>
    <source>
        <strain>NBRC 101917 / NGR234</strain>
    </source>
</reference>
<organism>
    <name type="scientific">Sinorhizobium fredii (strain NBRC 101917 / NGR234)</name>
    <dbReference type="NCBI Taxonomy" id="394"/>
    <lineage>
        <taxon>Bacteria</taxon>
        <taxon>Pseudomonadati</taxon>
        <taxon>Pseudomonadota</taxon>
        <taxon>Alphaproteobacteria</taxon>
        <taxon>Hyphomicrobiales</taxon>
        <taxon>Rhizobiaceae</taxon>
        <taxon>Sinorhizobium/Ensifer group</taxon>
        <taxon>Sinorhizobium</taxon>
    </lineage>
</organism>
<keyword id="KW-0238">DNA-binding</keyword>
<keyword id="KW-0614">Plasmid</keyword>
<keyword id="KW-1185">Reference proteome</keyword>
<keyword id="KW-0804">Transcription</keyword>
<keyword id="KW-0805">Transcription regulation</keyword>
<dbReference type="EMBL" id="U00090">
    <property type="protein sequence ID" value="AAB91814.1"/>
    <property type="molecule type" value="Genomic_DNA"/>
</dbReference>
<dbReference type="RefSeq" id="NP_444017.1">
    <property type="nucleotide sequence ID" value="NC_000914.2"/>
</dbReference>
<dbReference type="RefSeq" id="WP_010875235.1">
    <property type="nucleotide sequence ID" value="NC_000914.2"/>
</dbReference>
<dbReference type="SMR" id="P55613"/>
<dbReference type="KEGG" id="rhi:NGR_a02080"/>
<dbReference type="PATRIC" id="fig|394.7.peg.216"/>
<dbReference type="eggNOG" id="COG4957">
    <property type="taxonomic scope" value="Bacteria"/>
</dbReference>
<dbReference type="HOGENOM" id="CLU_106247_0_0_5"/>
<dbReference type="OrthoDB" id="9809693at2"/>
<dbReference type="Proteomes" id="UP000001054">
    <property type="component" value="Plasmid pNGR234a"/>
</dbReference>
<dbReference type="GO" id="GO:0003677">
    <property type="term" value="F:DNA binding"/>
    <property type="evidence" value="ECO:0007669"/>
    <property type="project" value="UniProtKB-KW"/>
</dbReference>
<dbReference type="GO" id="GO:0008270">
    <property type="term" value="F:zinc ion binding"/>
    <property type="evidence" value="ECO:0007669"/>
    <property type="project" value="InterPro"/>
</dbReference>
<dbReference type="GO" id="GO:0006355">
    <property type="term" value="P:regulation of DNA-templated transcription"/>
    <property type="evidence" value="ECO:0007669"/>
    <property type="project" value="InterPro"/>
</dbReference>
<dbReference type="Gene3D" id="1.10.10.1550">
    <property type="entry name" value="ROS/MUCR transcriptional regulator protein"/>
    <property type="match status" value="1"/>
</dbReference>
<dbReference type="InterPro" id="IPR041920">
    <property type="entry name" value="ROS/MUCR_sf"/>
</dbReference>
<dbReference type="InterPro" id="IPR008807">
    <property type="entry name" value="ROS_MUCR"/>
</dbReference>
<dbReference type="Pfam" id="PF05443">
    <property type="entry name" value="ROS_MUCR"/>
    <property type="match status" value="1"/>
</dbReference>
<feature type="chain" id="PRO_0000168176" description="Putative MucR family transcriptional regulatory protein y4pD">
    <location>
        <begin position="1"/>
        <end position="171"/>
    </location>
</feature>
<name>Y4PD_SINFN</name>
<evidence type="ECO:0000305" key="1"/>